<sequence length="150" mass="16042">MGKSILLINGPNLNLLGTREPHIYGNTTLADVEASCKAHAESLGATLATFQSNHEGAIIDRIQAARGNVDGIIINPGAFTHTSVAIRDALLGVGIPFIELHVSNVHAREPWRHHSYFSDKAAGIIVGLGVYGYKVAVEHVALNFKERAAL</sequence>
<dbReference type="EC" id="4.2.1.10" evidence="1"/>
<dbReference type="EMBL" id="BX649605">
    <property type="protein sequence ID" value="CAE47886.1"/>
    <property type="molecule type" value="Genomic_DNA"/>
</dbReference>
<dbReference type="EMBL" id="AAHF01000004">
    <property type="protein sequence ID" value="EAL90489.1"/>
    <property type="molecule type" value="Genomic_DNA"/>
</dbReference>
<dbReference type="RefSeq" id="XP_752527.1">
    <property type="nucleotide sequence ID" value="XM_747434.1"/>
</dbReference>
<dbReference type="SMR" id="Q6MYX3"/>
<dbReference type="STRING" id="330879.Q6MYX3"/>
<dbReference type="EnsemblFungi" id="EAL90489">
    <property type="protein sequence ID" value="EAL90489"/>
    <property type="gene ID" value="AFUA_1G11610"/>
</dbReference>
<dbReference type="GeneID" id="3510176"/>
<dbReference type="KEGG" id="afm:AFUA_1G11610"/>
<dbReference type="VEuPathDB" id="FungiDB:Afu1g11610"/>
<dbReference type="eggNOG" id="ENOG502S1A9">
    <property type="taxonomic scope" value="Eukaryota"/>
</dbReference>
<dbReference type="HOGENOM" id="CLU_090968_1_0_1"/>
<dbReference type="InParanoid" id="Q6MYX3"/>
<dbReference type="OMA" id="WIHEAGR"/>
<dbReference type="OrthoDB" id="8191625at2759"/>
<dbReference type="UniPathway" id="UPA00088">
    <property type="reaction ID" value="UER00178"/>
</dbReference>
<dbReference type="Proteomes" id="UP000002530">
    <property type="component" value="Chromosome 1"/>
</dbReference>
<dbReference type="GO" id="GO:0003855">
    <property type="term" value="F:3-dehydroquinate dehydratase activity"/>
    <property type="evidence" value="ECO:0000318"/>
    <property type="project" value="GO_Central"/>
</dbReference>
<dbReference type="GO" id="GO:0046279">
    <property type="term" value="P:3,4-dihydroxybenzoate biosynthetic process"/>
    <property type="evidence" value="ECO:0007669"/>
    <property type="project" value="UniProtKB-UniRule"/>
</dbReference>
<dbReference type="GO" id="GO:0019631">
    <property type="term" value="P:quinate catabolic process"/>
    <property type="evidence" value="ECO:0000318"/>
    <property type="project" value="GO_Central"/>
</dbReference>
<dbReference type="CDD" id="cd00466">
    <property type="entry name" value="DHQase_II"/>
    <property type="match status" value="1"/>
</dbReference>
<dbReference type="Gene3D" id="3.40.50.9100">
    <property type="entry name" value="Dehydroquinase, class II"/>
    <property type="match status" value="1"/>
</dbReference>
<dbReference type="HAMAP" id="MF_00169">
    <property type="entry name" value="AroQ"/>
    <property type="match status" value="1"/>
</dbReference>
<dbReference type="InterPro" id="IPR001874">
    <property type="entry name" value="DHquinase_II"/>
</dbReference>
<dbReference type="InterPro" id="IPR018509">
    <property type="entry name" value="DHquinase_II_CS"/>
</dbReference>
<dbReference type="InterPro" id="IPR036441">
    <property type="entry name" value="DHquinase_II_sf"/>
</dbReference>
<dbReference type="NCBIfam" id="TIGR01088">
    <property type="entry name" value="aroQ"/>
    <property type="match status" value="1"/>
</dbReference>
<dbReference type="NCBIfam" id="NF003804">
    <property type="entry name" value="PRK05395.1-1"/>
    <property type="match status" value="1"/>
</dbReference>
<dbReference type="NCBIfam" id="NF003805">
    <property type="entry name" value="PRK05395.1-2"/>
    <property type="match status" value="1"/>
</dbReference>
<dbReference type="NCBIfam" id="NF003806">
    <property type="entry name" value="PRK05395.1-3"/>
    <property type="match status" value="1"/>
</dbReference>
<dbReference type="NCBIfam" id="NF003807">
    <property type="entry name" value="PRK05395.1-4"/>
    <property type="match status" value="1"/>
</dbReference>
<dbReference type="PANTHER" id="PTHR21272">
    <property type="entry name" value="CATABOLIC 3-DEHYDROQUINASE"/>
    <property type="match status" value="1"/>
</dbReference>
<dbReference type="PANTHER" id="PTHR21272:SF5">
    <property type="entry name" value="CATABOLIC 3-DEHYDROQUINASE"/>
    <property type="match status" value="1"/>
</dbReference>
<dbReference type="Pfam" id="PF01220">
    <property type="entry name" value="DHquinase_II"/>
    <property type="match status" value="1"/>
</dbReference>
<dbReference type="PIRSF" id="PIRSF001399">
    <property type="entry name" value="DHquinase_II"/>
    <property type="match status" value="1"/>
</dbReference>
<dbReference type="SUPFAM" id="SSF52304">
    <property type="entry name" value="Type II 3-dehydroquinate dehydratase"/>
    <property type="match status" value="1"/>
</dbReference>
<dbReference type="PROSITE" id="PS01029">
    <property type="entry name" value="DEHYDROQUINASE_II"/>
    <property type="match status" value="1"/>
</dbReference>
<gene>
    <name evidence="1" type="primary">qutE1</name>
    <name type="ORF">AfA5A2.045</name>
    <name type="ORF">AFUA_1G11610</name>
</gene>
<name>3DHQ1_ASPFU</name>
<comment type="function">
    <text evidence="1">Is involved in the catabolism of quinate. Allows the utilization of quinate as carbon source via the beta-ketoadipate pathway.</text>
</comment>
<comment type="catalytic activity">
    <reaction evidence="1">
        <text>3-dehydroquinate = 3-dehydroshikimate + H2O</text>
        <dbReference type="Rhea" id="RHEA:21096"/>
        <dbReference type="ChEBI" id="CHEBI:15377"/>
        <dbReference type="ChEBI" id="CHEBI:16630"/>
        <dbReference type="ChEBI" id="CHEBI:32364"/>
        <dbReference type="EC" id="4.2.1.10"/>
    </reaction>
</comment>
<comment type="pathway">
    <text evidence="1">Aromatic compound metabolism; 3,4-dihydroxybenzoate biosynthesis; 3,4-dihydroxybenzoate from 3-dehydroquinate: step 1/2.</text>
</comment>
<comment type="subunit">
    <text evidence="1">Homododecamer. Adopts a ring-like structure, composed of an arrangement of two hexameric rings stacked on top of one another.</text>
</comment>
<comment type="similarity">
    <text evidence="1">Belongs to the type-II 3-dehydroquinase family.</text>
</comment>
<organism>
    <name type="scientific">Aspergillus fumigatus (strain ATCC MYA-4609 / CBS 101355 / FGSC A1100 / Af293)</name>
    <name type="common">Neosartorya fumigata</name>
    <dbReference type="NCBI Taxonomy" id="330879"/>
    <lineage>
        <taxon>Eukaryota</taxon>
        <taxon>Fungi</taxon>
        <taxon>Dikarya</taxon>
        <taxon>Ascomycota</taxon>
        <taxon>Pezizomycotina</taxon>
        <taxon>Eurotiomycetes</taxon>
        <taxon>Eurotiomycetidae</taxon>
        <taxon>Eurotiales</taxon>
        <taxon>Aspergillaceae</taxon>
        <taxon>Aspergillus</taxon>
        <taxon>Aspergillus subgen. Fumigati</taxon>
    </lineage>
</organism>
<feature type="chain" id="PRO_0000402354" description="Catabolic 3-dehydroquinase 1">
    <location>
        <begin position="1"/>
        <end position="150"/>
    </location>
</feature>
<feature type="active site" description="Proton acceptor" evidence="1">
    <location>
        <position position="24"/>
    </location>
</feature>
<feature type="active site" description="Proton donor" evidence="1">
    <location>
        <position position="101"/>
    </location>
</feature>
<feature type="binding site" evidence="1">
    <location>
        <position position="75"/>
    </location>
    <ligand>
        <name>substrate</name>
    </ligand>
</feature>
<feature type="binding site" evidence="1">
    <location>
        <position position="81"/>
    </location>
    <ligand>
        <name>substrate</name>
    </ligand>
</feature>
<feature type="binding site" evidence="1">
    <location>
        <position position="88"/>
    </location>
    <ligand>
        <name>substrate</name>
    </ligand>
</feature>
<feature type="binding site" evidence="1">
    <location>
        <begin position="102"/>
        <end position="103"/>
    </location>
    <ligand>
        <name>substrate</name>
    </ligand>
</feature>
<feature type="binding site" evidence="1">
    <location>
        <position position="112"/>
    </location>
    <ligand>
        <name>substrate</name>
    </ligand>
</feature>
<feature type="site" description="Transition state stabilizer" evidence="1">
    <location>
        <position position="19"/>
    </location>
</feature>
<accession>Q6MYX3</accession>
<accession>Q4WSU3</accession>
<evidence type="ECO:0000255" key="1">
    <source>
        <dbReference type="HAMAP-Rule" id="MF_03136"/>
    </source>
</evidence>
<proteinExistence type="inferred from homology"/>
<keyword id="KW-0456">Lyase</keyword>
<keyword id="KW-0672">Quinate metabolism</keyword>
<keyword id="KW-1185">Reference proteome</keyword>
<protein>
    <recommendedName>
        <fullName evidence="1">Catabolic 3-dehydroquinase 1</fullName>
        <shortName evidence="1">cDHQase 1</shortName>
        <ecNumber evidence="1">4.2.1.10</ecNumber>
    </recommendedName>
    <alternativeName>
        <fullName evidence="1">3-dehydroquinate dehydratase 1</fullName>
    </alternativeName>
</protein>
<reference key="1">
    <citation type="journal article" date="2004" name="Fungal Genet. Biol.">
        <title>Insight into the genome of Aspergillus fumigatus: analysis of a 922 kb region encompassing the nitrate assimilation gene cluster.</title>
        <authorList>
            <person name="Pain A."/>
            <person name="Woodward J.R."/>
            <person name="Quail M.A."/>
            <person name="Anderson M.J."/>
            <person name="Clark R."/>
            <person name="Collins M."/>
            <person name="Fosker N."/>
            <person name="Fraser A."/>
            <person name="Harris D.E."/>
            <person name="Larke N."/>
            <person name="Murphy L.D."/>
            <person name="Humphray S."/>
            <person name="O'Neil S."/>
            <person name="Pertea M."/>
            <person name="Price C."/>
            <person name="Rabbinowitsch E."/>
            <person name="Rajandream M.A."/>
            <person name="Salzberg S.L."/>
            <person name="Saunders D."/>
            <person name="Seeger K."/>
            <person name="Sharp S."/>
            <person name="Warren T."/>
            <person name="Denning D.W."/>
            <person name="Barrell B.G."/>
            <person name="Hall N."/>
        </authorList>
    </citation>
    <scope>NUCLEOTIDE SEQUENCE [LARGE SCALE GENOMIC DNA]</scope>
    <source>
        <strain>ATCC MYA-4609 / CBS 101355 / FGSC A1100 / Af293</strain>
    </source>
</reference>
<reference key="2">
    <citation type="journal article" date="2005" name="Nature">
        <title>Genomic sequence of the pathogenic and allergenic filamentous fungus Aspergillus fumigatus.</title>
        <authorList>
            <person name="Nierman W.C."/>
            <person name="Pain A."/>
            <person name="Anderson M.J."/>
            <person name="Wortman J.R."/>
            <person name="Kim H.S."/>
            <person name="Arroyo J."/>
            <person name="Berriman M."/>
            <person name="Abe K."/>
            <person name="Archer D.B."/>
            <person name="Bermejo C."/>
            <person name="Bennett J.W."/>
            <person name="Bowyer P."/>
            <person name="Chen D."/>
            <person name="Collins M."/>
            <person name="Coulsen R."/>
            <person name="Davies R."/>
            <person name="Dyer P.S."/>
            <person name="Farman M.L."/>
            <person name="Fedorova N."/>
            <person name="Fedorova N.D."/>
            <person name="Feldblyum T.V."/>
            <person name="Fischer R."/>
            <person name="Fosker N."/>
            <person name="Fraser A."/>
            <person name="Garcia J.L."/>
            <person name="Garcia M.J."/>
            <person name="Goble A."/>
            <person name="Goldman G.H."/>
            <person name="Gomi K."/>
            <person name="Griffith-Jones S."/>
            <person name="Gwilliam R."/>
            <person name="Haas B.J."/>
            <person name="Haas H."/>
            <person name="Harris D.E."/>
            <person name="Horiuchi H."/>
            <person name="Huang J."/>
            <person name="Humphray S."/>
            <person name="Jimenez J."/>
            <person name="Keller N."/>
            <person name="Khouri H."/>
            <person name="Kitamoto K."/>
            <person name="Kobayashi T."/>
            <person name="Konzack S."/>
            <person name="Kulkarni R."/>
            <person name="Kumagai T."/>
            <person name="Lafton A."/>
            <person name="Latge J.-P."/>
            <person name="Li W."/>
            <person name="Lord A."/>
            <person name="Lu C."/>
            <person name="Majoros W.H."/>
            <person name="May G.S."/>
            <person name="Miller B.L."/>
            <person name="Mohamoud Y."/>
            <person name="Molina M."/>
            <person name="Monod M."/>
            <person name="Mouyna I."/>
            <person name="Mulligan S."/>
            <person name="Murphy L.D."/>
            <person name="O'Neil S."/>
            <person name="Paulsen I."/>
            <person name="Penalva M.A."/>
            <person name="Pertea M."/>
            <person name="Price C."/>
            <person name="Pritchard B.L."/>
            <person name="Quail M.A."/>
            <person name="Rabbinowitsch E."/>
            <person name="Rawlins N."/>
            <person name="Rajandream M.A."/>
            <person name="Reichard U."/>
            <person name="Renauld H."/>
            <person name="Robson G.D."/>
            <person name="Rodriguez de Cordoba S."/>
            <person name="Rodriguez-Pena J.M."/>
            <person name="Ronning C.M."/>
            <person name="Rutter S."/>
            <person name="Salzberg S.L."/>
            <person name="Sanchez M."/>
            <person name="Sanchez-Ferrero J.C."/>
            <person name="Saunders D."/>
            <person name="Seeger K."/>
            <person name="Squares R."/>
            <person name="Squares S."/>
            <person name="Takeuchi M."/>
            <person name="Tekaia F."/>
            <person name="Turner G."/>
            <person name="Vazquez de Aldana C.R."/>
            <person name="Weidman J."/>
            <person name="White O."/>
            <person name="Woodward J.R."/>
            <person name="Yu J.-H."/>
            <person name="Fraser C.M."/>
            <person name="Galagan J.E."/>
            <person name="Asai K."/>
            <person name="Machida M."/>
            <person name="Hall N."/>
            <person name="Barrell B.G."/>
            <person name="Denning D.W."/>
        </authorList>
    </citation>
    <scope>NUCLEOTIDE SEQUENCE [LARGE SCALE GENOMIC DNA]</scope>
    <source>
        <strain>ATCC MYA-4609 / CBS 101355 / FGSC A1100 / Af293</strain>
    </source>
</reference>